<evidence type="ECO:0000250" key="1">
    <source>
        <dbReference type="UniProtKB" id="Q71RS6"/>
    </source>
</evidence>
<evidence type="ECO:0000255" key="2"/>
<evidence type="ECO:0000269" key="3">
    <source>
    </source>
</evidence>
<evidence type="ECO:0000269" key="4">
    <source>
    </source>
</evidence>
<evidence type="ECO:0000305" key="5"/>
<evidence type="ECO:0000305" key="6">
    <source>
    </source>
</evidence>
<comment type="function">
    <text evidence="1 3">Calcium, potassium:sodium antiporter that transports 1 Ca(2+) and 1 K(+) to the melanosome in exchange for 4 cytoplasmic Na(+) (By similarity). Involved in pigmentation, possibly by participating in ion transport in melanosomes (PubMed:16357253). Predominant sodium-calcium exchanger in melanocytes (PubMed:16357253).</text>
</comment>
<comment type="catalytic activity">
    <reaction evidence="1">
        <text>Ca(2+)(out) + K(+)(out) + 4 Na(+)(in) = Ca(2+)(in) + K(+)(in) + 4 Na(+)(out)</text>
        <dbReference type="Rhea" id="RHEA:69967"/>
        <dbReference type="ChEBI" id="CHEBI:29101"/>
        <dbReference type="ChEBI" id="CHEBI:29103"/>
        <dbReference type="ChEBI" id="CHEBI:29108"/>
    </reaction>
</comment>
<comment type="subcellular location">
    <subcellularLocation>
        <location evidence="6">Golgi apparatus</location>
        <location evidence="6">trans-Golgi network membrane</location>
        <topology evidence="2">Multi-pass membrane protein</topology>
    </subcellularLocation>
    <subcellularLocation>
        <location evidence="6">Melanosome</location>
    </subcellularLocation>
    <text evidence="1">Enriched in late-stage melanosomes.</text>
</comment>
<comment type="tissue specificity">
    <text evidence="3">Highly expressed in melanin-producing cells. Colocalizes with melanin biosynthesis marker dct.</text>
</comment>
<comment type="developmental stage">
    <text evidence="4">Expressed in the retinal pigment epithelium and in the melanopore precursors at 1 day post-fertilization.</text>
</comment>
<comment type="disruption phenotype">
    <text evidence="3">Fishes show a delayed and reduced development of pigmentation. They display a diminished number, size and density of melanosomes.</text>
</comment>
<comment type="similarity">
    <text evidence="5">Belongs to the Ca(2+):cation antiporter (CaCA) (TC 2.A.19) family. SLC24A subfamily.</text>
</comment>
<comment type="online information" name="Protein Spotlight">
    <link uri="https://www.proteinspotlight.org/back_issues/074"/>
    <text>Skin-deep - Issue 74 of September 2006</text>
</comment>
<organism>
    <name type="scientific">Danio rerio</name>
    <name type="common">Zebrafish</name>
    <name type="synonym">Brachydanio rerio</name>
    <dbReference type="NCBI Taxonomy" id="7955"/>
    <lineage>
        <taxon>Eukaryota</taxon>
        <taxon>Metazoa</taxon>
        <taxon>Chordata</taxon>
        <taxon>Craniata</taxon>
        <taxon>Vertebrata</taxon>
        <taxon>Euteleostomi</taxon>
        <taxon>Actinopterygii</taxon>
        <taxon>Neopterygii</taxon>
        <taxon>Teleostei</taxon>
        <taxon>Ostariophysi</taxon>
        <taxon>Cypriniformes</taxon>
        <taxon>Danionidae</taxon>
        <taxon>Danioninae</taxon>
        <taxon>Danio</taxon>
    </lineage>
</organism>
<name>NCKX5_DANRE</name>
<feature type="signal peptide" evidence="2">
    <location>
        <begin position="1"/>
        <end position="35"/>
    </location>
</feature>
<feature type="chain" id="PRO_0000045755" description="Sodium/potassium/calcium exchanger 5">
    <location>
        <begin position="36"/>
        <end position="513"/>
    </location>
</feature>
<feature type="topological domain" description="Extracellular" evidence="2">
    <location>
        <begin position="36"/>
        <end position="78"/>
    </location>
</feature>
<feature type="transmembrane region" description="Helical; Name=1" evidence="2">
    <location>
        <begin position="79"/>
        <end position="99"/>
    </location>
</feature>
<feature type="topological domain" description="Cytoplasmic" evidence="2">
    <location>
        <begin position="100"/>
        <end position="123"/>
    </location>
</feature>
<feature type="transmembrane region" description="Helical; Name=2" evidence="2">
    <location>
        <begin position="124"/>
        <end position="144"/>
    </location>
</feature>
<feature type="topological domain" description="Extracellular" evidence="2">
    <location>
        <begin position="145"/>
        <end position="148"/>
    </location>
</feature>
<feature type="transmembrane region" description="Helical; Name=3" evidence="2">
    <location>
        <begin position="149"/>
        <end position="169"/>
    </location>
</feature>
<feature type="topological domain" description="Cytoplasmic" evidence="2">
    <location>
        <begin position="170"/>
        <end position="181"/>
    </location>
</feature>
<feature type="transmembrane region" description="Helical; Name=4" evidence="2">
    <location>
        <begin position="182"/>
        <end position="202"/>
    </location>
</feature>
<feature type="topological domain" description="Extracellular" evidence="2">
    <location>
        <begin position="203"/>
        <end position="207"/>
    </location>
</feature>
<feature type="transmembrane region" description="Helical; Name=5" evidence="2">
    <location>
        <begin position="208"/>
        <end position="228"/>
    </location>
</feature>
<feature type="topological domain" description="Cytoplasmic" evidence="2">
    <location>
        <begin position="229"/>
        <end position="315"/>
    </location>
</feature>
<feature type="transmembrane region" description="Helical; Name=6" evidence="2">
    <location>
        <begin position="316"/>
        <end position="336"/>
    </location>
</feature>
<feature type="topological domain" description="Extracellular" evidence="2">
    <location>
        <begin position="337"/>
        <end position="350"/>
    </location>
</feature>
<feature type="transmembrane region" description="Helical; Name=7" evidence="2">
    <location>
        <begin position="351"/>
        <end position="371"/>
    </location>
</feature>
<feature type="topological domain" description="Cytoplasmic" evidence="2">
    <location>
        <begin position="372"/>
        <end position="381"/>
    </location>
</feature>
<feature type="transmembrane region" description="Helical; Name=8" evidence="2">
    <location>
        <begin position="382"/>
        <end position="402"/>
    </location>
</feature>
<feature type="topological domain" description="Extracellular" evidence="2">
    <location>
        <begin position="403"/>
        <end position="420"/>
    </location>
</feature>
<feature type="transmembrane region" description="Helical; Name=9" evidence="2">
    <location>
        <begin position="421"/>
        <end position="441"/>
    </location>
</feature>
<feature type="topological domain" description="Cytoplasmic" evidence="2">
    <location>
        <begin position="442"/>
        <end position="450"/>
    </location>
</feature>
<feature type="transmembrane region" description="Helical; Name=10" evidence="2">
    <location>
        <begin position="451"/>
        <end position="471"/>
    </location>
</feature>
<feature type="topological domain" description="Extracellular" evidence="2">
    <location>
        <begin position="472"/>
        <end position="482"/>
    </location>
</feature>
<feature type="transmembrane region" description="Helical; Name=11" evidence="2">
    <location>
        <begin position="483"/>
        <end position="503"/>
    </location>
</feature>
<feature type="topological domain" description="Cytoplasmic" evidence="2">
    <location>
        <begin position="504"/>
        <end position="513"/>
    </location>
</feature>
<feature type="sequence conflict" description="In Ref. 1; AAS76476." evidence="5" ref="1">
    <original>A</original>
    <variation>S</variation>
    <location>
        <position position="192"/>
    </location>
</feature>
<feature type="sequence conflict" description="In Ref. 1; AAS76476." evidence="5" ref="1">
    <original>R</original>
    <variation>K</variation>
    <location>
        <position position="231"/>
    </location>
</feature>
<feature type="sequence conflict" description="In Ref. 1; AAS76476." evidence="5" ref="1">
    <original>E</original>
    <variation>D</variation>
    <location>
        <position position="445"/>
    </location>
</feature>
<feature type="sequence conflict" description="In Ref. 1; AAY89722." evidence="5" ref="1">
    <original>D</original>
    <variation>N</variation>
    <location>
        <position position="477"/>
    </location>
</feature>
<feature type="sequence conflict" description="In Ref. 1; AAY89722." evidence="5" ref="1">
    <original>S</original>
    <variation>R</variation>
    <location>
        <position position="512"/>
    </location>
</feature>
<gene>
    <name type="primary">slc24a5</name>
    <name type="synonym">nckx5</name>
</gene>
<dbReference type="EMBL" id="AY538713">
    <property type="protein sequence ID" value="AAY89721.1"/>
    <property type="molecule type" value="mRNA"/>
</dbReference>
<dbReference type="EMBL" id="AY581204">
    <property type="protein sequence ID" value="AAS76476.1"/>
    <property type="molecule type" value="Genomic_DNA"/>
</dbReference>
<dbReference type="EMBL" id="AY682553">
    <property type="protein sequence ID" value="AAY89722.1"/>
    <property type="molecule type" value="mRNA"/>
</dbReference>
<dbReference type="RefSeq" id="NP_001025451.1">
    <property type="nucleotide sequence ID" value="NM_001030280.1"/>
</dbReference>
<dbReference type="FunCoup" id="Q49SH1">
    <property type="interactions" value="846"/>
</dbReference>
<dbReference type="STRING" id="7955.ENSDARP00000030499"/>
<dbReference type="PaxDb" id="7955-ENSDARP00000030499"/>
<dbReference type="GeneID" id="570312"/>
<dbReference type="KEGG" id="dre:570312"/>
<dbReference type="AGR" id="ZFIN:ZDB-GENE-031210-1"/>
<dbReference type="CTD" id="283652"/>
<dbReference type="ZFIN" id="ZDB-GENE-031210-1">
    <property type="gene designation" value="slc24a5"/>
</dbReference>
<dbReference type="eggNOG" id="KOG1307">
    <property type="taxonomic scope" value="Eukaryota"/>
</dbReference>
<dbReference type="InParanoid" id="Q49SH1"/>
<dbReference type="OrthoDB" id="2127281at2759"/>
<dbReference type="PhylomeDB" id="Q49SH1"/>
<dbReference type="PRO" id="PR:Q49SH1"/>
<dbReference type="Proteomes" id="UP000000437">
    <property type="component" value="Chromosome 18"/>
</dbReference>
<dbReference type="GO" id="GO:0042470">
    <property type="term" value="C:melanosome"/>
    <property type="evidence" value="ECO:0007669"/>
    <property type="project" value="UniProtKB-SubCell"/>
</dbReference>
<dbReference type="GO" id="GO:0016020">
    <property type="term" value="C:membrane"/>
    <property type="evidence" value="ECO:0007669"/>
    <property type="project" value="UniProtKB-KW"/>
</dbReference>
<dbReference type="GO" id="GO:0005802">
    <property type="term" value="C:trans-Golgi network"/>
    <property type="evidence" value="ECO:0000318"/>
    <property type="project" value="GO_Central"/>
</dbReference>
<dbReference type="GO" id="GO:0005262">
    <property type="term" value="F:calcium channel activity"/>
    <property type="evidence" value="ECO:0000318"/>
    <property type="project" value="GO_Central"/>
</dbReference>
<dbReference type="GO" id="GO:0008273">
    <property type="term" value="F:calcium, potassium:sodium antiporter activity"/>
    <property type="evidence" value="ECO:0000318"/>
    <property type="project" value="GO_Central"/>
</dbReference>
<dbReference type="GO" id="GO:0015293">
    <property type="term" value="F:symporter activity"/>
    <property type="evidence" value="ECO:0007669"/>
    <property type="project" value="UniProtKB-KW"/>
</dbReference>
<dbReference type="GO" id="GO:0070588">
    <property type="term" value="P:calcium ion transmembrane transport"/>
    <property type="evidence" value="ECO:0000318"/>
    <property type="project" value="GO_Central"/>
</dbReference>
<dbReference type="GO" id="GO:0048066">
    <property type="term" value="P:developmental pigmentation"/>
    <property type="evidence" value="ECO:0000315"/>
    <property type="project" value="ZFIN"/>
</dbReference>
<dbReference type="GO" id="GO:0006874">
    <property type="term" value="P:intracellular calcium ion homeostasis"/>
    <property type="evidence" value="ECO:0000318"/>
    <property type="project" value="GO_Central"/>
</dbReference>
<dbReference type="GO" id="GO:0030318">
    <property type="term" value="P:melanocyte differentiation"/>
    <property type="evidence" value="ECO:0000315"/>
    <property type="project" value="ZFIN"/>
</dbReference>
<dbReference type="GO" id="GO:0097324">
    <property type="term" value="P:melanocyte migration"/>
    <property type="evidence" value="ECO:0000315"/>
    <property type="project" value="ZFIN"/>
</dbReference>
<dbReference type="GO" id="GO:0043473">
    <property type="term" value="P:pigmentation"/>
    <property type="evidence" value="ECO:0000315"/>
    <property type="project" value="ZFIN"/>
</dbReference>
<dbReference type="FunFam" id="1.20.1420.30:FF:000009">
    <property type="entry name" value="sodium/potassium/calcium exchanger 5 isoform X2"/>
    <property type="match status" value="1"/>
</dbReference>
<dbReference type="FunFam" id="1.20.1420.30:FF:000015">
    <property type="entry name" value="sodium/potassium/calcium exchanger 5 isoform X2"/>
    <property type="match status" value="1"/>
</dbReference>
<dbReference type="Gene3D" id="1.20.1420.30">
    <property type="entry name" value="NCX, central ion-binding region"/>
    <property type="match status" value="2"/>
</dbReference>
<dbReference type="InterPro" id="IPR004481">
    <property type="entry name" value="K/Na/Ca-exchanger"/>
</dbReference>
<dbReference type="InterPro" id="IPR004837">
    <property type="entry name" value="NaCa_Exmemb"/>
</dbReference>
<dbReference type="InterPro" id="IPR044880">
    <property type="entry name" value="NCX_ion-bd_dom_sf"/>
</dbReference>
<dbReference type="NCBIfam" id="TIGR00367">
    <property type="entry name" value="calcium/sodium antiporter"/>
    <property type="match status" value="1"/>
</dbReference>
<dbReference type="PANTHER" id="PTHR10846">
    <property type="entry name" value="SODIUM/POTASSIUM/CALCIUM EXCHANGER"/>
    <property type="match status" value="1"/>
</dbReference>
<dbReference type="PANTHER" id="PTHR10846:SF61">
    <property type="entry name" value="SODIUM_POTASSIUM_CALCIUM EXCHANGER 5"/>
    <property type="match status" value="1"/>
</dbReference>
<dbReference type="Pfam" id="PF01699">
    <property type="entry name" value="Na_Ca_ex"/>
    <property type="match status" value="2"/>
</dbReference>
<reference key="1">
    <citation type="journal article" date="2005" name="Science">
        <title>SLC24A5, a putative cation exchanger, affects pigmentation in zebrafish and humans.</title>
        <authorList>
            <person name="Lamason R.L."/>
            <person name="Mohideen M.-A.P.K."/>
            <person name="Mest J.R."/>
            <person name="Wong A.C."/>
            <person name="Norton H.L."/>
            <person name="Aros M.C."/>
            <person name="Jurynec M.J."/>
            <person name="Mao X."/>
            <person name="Humphreville V.R."/>
            <person name="Humbert J.E."/>
            <person name="Sinha S."/>
            <person name="Moore J.L."/>
            <person name="Jagadeeswaran P."/>
            <person name="Zhao W."/>
            <person name="Ning G."/>
            <person name="Makalowska I."/>
            <person name="McKeigue P.M."/>
            <person name="O'Donnell D."/>
            <person name="Kittles R."/>
            <person name="Parra E.J."/>
            <person name="Mangini N.J."/>
            <person name="Grunwald D.J."/>
            <person name="Shriver M.D."/>
            <person name="Canfield V.A."/>
            <person name="Cheng K.C."/>
        </authorList>
    </citation>
    <scope>NUCLEOTIDE SEQUENCE [GENOMIC DNA / MRNA]</scope>
    <scope>FUNCTION</scope>
    <scope>SUBCELLULAR LOCATION</scope>
    <scope>TISSUE SPECIFICITY</scope>
    <scope>DISRUPTION PHENOTYPE</scope>
</reference>
<reference key="2">
    <citation type="journal article" date="2009" name="Mol. Cell. Biol.">
        <title>Nonsense-mediated mRNA decay effectors are essential for zebrafish embryonic development and survival.</title>
        <authorList>
            <person name="Wittkopp N."/>
            <person name="Huntzinger E."/>
            <person name="Weiler C."/>
            <person name="Sauliere J."/>
            <person name="Schmidt S."/>
            <person name="Sonawane M."/>
            <person name="Izaurralde E."/>
        </authorList>
    </citation>
    <scope>DEVELOPMENTAL STAGE</scope>
</reference>
<sequence length="513" mass="56782">MRTDVFLQRRKRRDVLLSIIALLLLIFAIVHLVFCAGLSFQGSSSARVRRDLENASECVQPQSSEFPEGFFTVQERKDGGILIYFMIIFYMLLSVSIVCDEYFLPSLEVISERLGLSQDVAGATFMAAGSSAPELVTAFLGVFVTKGDIGVSTIMGSAVYNLLCICAACGLLSSAVGRLSCWPLFRDCVAYAISVAAVIAIISDNRVYWYDGACLLLVYGVYVAVLCFDLRISEYVMQRFSPCCWCLKPRDRDSGEQQPLVGWSDDSSLRVQRRSRNDSGIFQDDSGYSHLSLSLHGLNEISDEHKSVFSMPDHDLKRILWVLSLPVSTLLFVSVPDCRRPFWKNFYMLTFLMSAVWISAFTYVLVWMVTIVGETLGIPDTVMGMTLLAAGTSIPDTVASVMVAREGKSDMAMSNIVGSNVFDMLCLGLPWFIQTVFVDVGSPVEVNSSGLVFMSCTLLLSIIFLFLAVHINGWKLDWKLGLVCLACYILFATLSILYELGIIGNNPIRSCSD</sequence>
<keyword id="KW-0050">Antiport</keyword>
<keyword id="KW-0106">Calcium</keyword>
<keyword id="KW-0109">Calcium transport</keyword>
<keyword id="KW-0333">Golgi apparatus</keyword>
<keyword id="KW-0406">Ion transport</keyword>
<keyword id="KW-0472">Membrane</keyword>
<keyword id="KW-0630">Potassium</keyword>
<keyword id="KW-0633">Potassium transport</keyword>
<keyword id="KW-1185">Reference proteome</keyword>
<keyword id="KW-0716">Sensory transduction</keyword>
<keyword id="KW-0732">Signal</keyword>
<keyword id="KW-0915">Sodium</keyword>
<keyword id="KW-0739">Sodium transport</keyword>
<keyword id="KW-0769">Symport</keyword>
<keyword id="KW-0812">Transmembrane</keyword>
<keyword id="KW-1133">Transmembrane helix</keyword>
<keyword id="KW-0813">Transport</keyword>
<proteinExistence type="evidence at transcript level"/>
<protein>
    <recommendedName>
        <fullName>Sodium/potassium/calcium exchanger 5</fullName>
    </recommendedName>
    <alternativeName>
        <fullName>Na(+)/K(+)/Ca(2+)-exchange protein 5</fullName>
    </alternativeName>
    <alternativeName>
        <fullName>Protein golden</fullName>
    </alternativeName>
    <alternativeName>
        <fullName>Solute carrier family 24 member 5</fullName>
    </alternativeName>
</protein>
<accession>Q49SH1</accession>
<accession>Q49P06</accession>
<accession>Q592E6</accession>